<evidence type="ECO:0000255" key="1">
    <source>
        <dbReference type="HAMAP-Rule" id="MF_01013"/>
    </source>
</evidence>
<feature type="chain" id="PRO_0000142197" description="Imidazole glycerol phosphate synthase subunit HisF">
    <location>
        <begin position="1"/>
        <end position="257"/>
    </location>
</feature>
<feature type="active site" evidence="1">
    <location>
        <position position="11"/>
    </location>
</feature>
<feature type="active site" evidence="1">
    <location>
        <position position="130"/>
    </location>
</feature>
<protein>
    <recommendedName>
        <fullName evidence="1">Imidazole glycerol phosphate synthase subunit HisF</fullName>
        <ecNumber evidence="1">4.3.2.10</ecNumber>
    </recommendedName>
    <alternativeName>
        <fullName evidence="1">IGP synthase cyclase subunit</fullName>
    </alternativeName>
    <alternativeName>
        <fullName evidence="1">IGP synthase subunit HisF</fullName>
    </alternativeName>
    <alternativeName>
        <fullName evidence="1">ImGP synthase subunit HisF</fullName>
        <shortName evidence="1">IGPS subunit HisF</shortName>
    </alternativeName>
</protein>
<keyword id="KW-0028">Amino-acid biosynthesis</keyword>
<keyword id="KW-0963">Cytoplasm</keyword>
<keyword id="KW-0368">Histidine biosynthesis</keyword>
<keyword id="KW-0456">Lyase</keyword>
<keyword id="KW-1185">Reference proteome</keyword>
<proteinExistence type="inferred from homology"/>
<name>HIS6_PHOPR</name>
<comment type="function">
    <text evidence="1">IGPS catalyzes the conversion of PRFAR and glutamine to IGP, AICAR and glutamate. The HisF subunit catalyzes the cyclization activity that produces IGP and AICAR from PRFAR using the ammonia provided by the HisH subunit.</text>
</comment>
<comment type="catalytic activity">
    <reaction evidence="1">
        <text>5-[(5-phospho-1-deoxy-D-ribulos-1-ylimino)methylamino]-1-(5-phospho-beta-D-ribosyl)imidazole-4-carboxamide + L-glutamine = D-erythro-1-(imidazol-4-yl)glycerol 3-phosphate + 5-amino-1-(5-phospho-beta-D-ribosyl)imidazole-4-carboxamide + L-glutamate + H(+)</text>
        <dbReference type="Rhea" id="RHEA:24793"/>
        <dbReference type="ChEBI" id="CHEBI:15378"/>
        <dbReference type="ChEBI" id="CHEBI:29985"/>
        <dbReference type="ChEBI" id="CHEBI:58278"/>
        <dbReference type="ChEBI" id="CHEBI:58359"/>
        <dbReference type="ChEBI" id="CHEBI:58475"/>
        <dbReference type="ChEBI" id="CHEBI:58525"/>
        <dbReference type="EC" id="4.3.2.10"/>
    </reaction>
</comment>
<comment type="pathway">
    <text evidence="1">Amino-acid biosynthesis; L-histidine biosynthesis; L-histidine from 5-phospho-alpha-D-ribose 1-diphosphate: step 5/9.</text>
</comment>
<comment type="subunit">
    <text evidence="1">Heterodimer of HisH and HisF.</text>
</comment>
<comment type="subcellular location">
    <subcellularLocation>
        <location evidence="1">Cytoplasm</location>
    </subcellularLocation>
</comment>
<comment type="similarity">
    <text evidence="1">Belongs to the HisA/HisF family.</text>
</comment>
<accession>P62452</accession>
<organism>
    <name type="scientific">Photobacterium profundum (strain SS9)</name>
    <dbReference type="NCBI Taxonomy" id="298386"/>
    <lineage>
        <taxon>Bacteria</taxon>
        <taxon>Pseudomonadati</taxon>
        <taxon>Pseudomonadota</taxon>
        <taxon>Gammaproteobacteria</taxon>
        <taxon>Vibrionales</taxon>
        <taxon>Vibrionaceae</taxon>
        <taxon>Photobacterium</taxon>
    </lineage>
</organism>
<reference key="1">
    <citation type="journal article" date="2005" name="Science">
        <title>Life at depth: Photobacterium profundum genome sequence and expression analysis.</title>
        <authorList>
            <person name="Vezzi A."/>
            <person name="Campanaro S."/>
            <person name="D'Angelo M."/>
            <person name="Simonato F."/>
            <person name="Vitulo N."/>
            <person name="Lauro F.M."/>
            <person name="Cestaro A."/>
            <person name="Malacrida G."/>
            <person name="Simionati B."/>
            <person name="Cannata N."/>
            <person name="Romualdi C."/>
            <person name="Bartlett D.H."/>
            <person name="Valle G."/>
        </authorList>
    </citation>
    <scope>NUCLEOTIDE SEQUENCE [LARGE SCALE GENOMIC DNA]</scope>
    <source>
        <strain>ATCC BAA-1253 / SS9</strain>
    </source>
</reference>
<dbReference type="EC" id="4.3.2.10" evidence="1"/>
<dbReference type="EMBL" id="CR378666">
    <property type="protein sequence ID" value="CAG19497.1"/>
    <property type="molecule type" value="Genomic_DNA"/>
</dbReference>
<dbReference type="RefSeq" id="WP_011217830.1">
    <property type="nucleotide sequence ID" value="NC_006370.1"/>
</dbReference>
<dbReference type="SMR" id="P62452"/>
<dbReference type="STRING" id="298386.PBPRA1086"/>
<dbReference type="KEGG" id="ppr:PBPRA1086"/>
<dbReference type="eggNOG" id="COG0107">
    <property type="taxonomic scope" value="Bacteria"/>
</dbReference>
<dbReference type="HOGENOM" id="CLU_048577_4_0_6"/>
<dbReference type="UniPathway" id="UPA00031">
    <property type="reaction ID" value="UER00010"/>
</dbReference>
<dbReference type="Proteomes" id="UP000000593">
    <property type="component" value="Chromosome 1"/>
</dbReference>
<dbReference type="GO" id="GO:0005737">
    <property type="term" value="C:cytoplasm"/>
    <property type="evidence" value="ECO:0007669"/>
    <property type="project" value="UniProtKB-SubCell"/>
</dbReference>
<dbReference type="GO" id="GO:0000107">
    <property type="term" value="F:imidazoleglycerol-phosphate synthase activity"/>
    <property type="evidence" value="ECO:0007669"/>
    <property type="project" value="UniProtKB-UniRule"/>
</dbReference>
<dbReference type="GO" id="GO:0016829">
    <property type="term" value="F:lyase activity"/>
    <property type="evidence" value="ECO:0007669"/>
    <property type="project" value="UniProtKB-KW"/>
</dbReference>
<dbReference type="GO" id="GO:0000105">
    <property type="term" value="P:L-histidine biosynthetic process"/>
    <property type="evidence" value="ECO:0007669"/>
    <property type="project" value="UniProtKB-UniRule"/>
</dbReference>
<dbReference type="CDD" id="cd04731">
    <property type="entry name" value="HisF"/>
    <property type="match status" value="1"/>
</dbReference>
<dbReference type="FunFam" id="3.20.20.70:FF:000006">
    <property type="entry name" value="Imidazole glycerol phosphate synthase subunit HisF"/>
    <property type="match status" value="1"/>
</dbReference>
<dbReference type="Gene3D" id="3.20.20.70">
    <property type="entry name" value="Aldolase class I"/>
    <property type="match status" value="1"/>
</dbReference>
<dbReference type="HAMAP" id="MF_01013">
    <property type="entry name" value="HisF"/>
    <property type="match status" value="1"/>
</dbReference>
<dbReference type="InterPro" id="IPR013785">
    <property type="entry name" value="Aldolase_TIM"/>
</dbReference>
<dbReference type="InterPro" id="IPR006062">
    <property type="entry name" value="His_biosynth"/>
</dbReference>
<dbReference type="InterPro" id="IPR004651">
    <property type="entry name" value="HisF"/>
</dbReference>
<dbReference type="InterPro" id="IPR050064">
    <property type="entry name" value="IGPS_HisA/HisF"/>
</dbReference>
<dbReference type="InterPro" id="IPR011060">
    <property type="entry name" value="RibuloseP-bd_barrel"/>
</dbReference>
<dbReference type="NCBIfam" id="TIGR00735">
    <property type="entry name" value="hisF"/>
    <property type="match status" value="1"/>
</dbReference>
<dbReference type="PANTHER" id="PTHR21235:SF2">
    <property type="entry name" value="IMIDAZOLE GLYCEROL PHOSPHATE SYNTHASE HISHF"/>
    <property type="match status" value="1"/>
</dbReference>
<dbReference type="PANTHER" id="PTHR21235">
    <property type="entry name" value="IMIDAZOLE GLYCEROL PHOSPHATE SYNTHASE SUBUNIT HISF/H IGP SYNTHASE SUBUNIT HISF/H"/>
    <property type="match status" value="1"/>
</dbReference>
<dbReference type="Pfam" id="PF00977">
    <property type="entry name" value="His_biosynth"/>
    <property type="match status" value="1"/>
</dbReference>
<dbReference type="SUPFAM" id="SSF51366">
    <property type="entry name" value="Ribulose-phoshate binding barrel"/>
    <property type="match status" value="1"/>
</dbReference>
<sequence length="257" mass="28364">MLAKRIVPCLDVRDGQVVKGVQFRNHEIIGDIVPLAKRYAEEGADELVFYDITASSDGRVVDKSWVARVAEVIDIPFCVAGGIKSVEDASRILQFGADKVSINSPALANPALITELADKFGVQCIVVGIDSYFDAETGKYQVYQFTGDESRTKATQWETRDWVLEVQKRGAGEIVLNMMNQDGVRNGYDLKQLNMVREVCHVPLIASGGAGEMVHFADAYQKANVDGALAASVFHKQIINIGELKQYLKEQNVEIRL</sequence>
<gene>
    <name evidence="1" type="primary">hisF</name>
    <name type="ordered locus">PBPRA1086</name>
</gene>